<reference key="1">
    <citation type="journal article" date="2014" name="Proc. Natl. Acad. Sci. U.S.A.">
        <title>Extensive sampling of basidiomycete genomes demonstrates inadequacy of the white-rot/brown-rot paradigm for wood decay fungi.</title>
        <authorList>
            <person name="Riley R."/>
            <person name="Salamov A.A."/>
            <person name="Brown D.W."/>
            <person name="Nagy L.G."/>
            <person name="Floudas D."/>
            <person name="Held B.W."/>
            <person name="Levasseur A."/>
            <person name="Lombard V."/>
            <person name="Morin E."/>
            <person name="Otillar R."/>
            <person name="Lindquist E.A."/>
            <person name="Sun H."/>
            <person name="LaButti K.M."/>
            <person name="Schmutz J."/>
            <person name="Jabbour D."/>
            <person name="Luo H."/>
            <person name="Baker S.E."/>
            <person name="Pisabarro A.G."/>
            <person name="Walton J.D."/>
            <person name="Blanchette R.A."/>
            <person name="Henrissat B."/>
            <person name="Martin F."/>
            <person name="Cullen D."/>
            <person name="Hibbett D.S."/>
            <person name="Grigoriev I.V."/>
        </authorList>
    </citation>
    <scope>NUCLEOTIDE SEQUENCE [LARGE SCALE GENOMIC DNA]</scope>
    <source>
        <strain>PC15</strain>
    </source>
</reference>
<reference key="2">
    <citation type="journal article" date="2021" name="Microbiol. Res.">
        <title>Identification of hydrophobin genes and their physiological functions related to growth and development in Pleurotus ostreatus.</title>
        <authorList>
            <person name="Xu D."/>
            <person name="Wang Y."/>
            <person name="Keerio A.A."/>
            <person name="Ma A."/>
        </authorList>
    </citation>
    <scope>IDENTIFICATION</scope>
</reference>
<reference key="3">
    <citation type="journal article" date="2025" name="Fungal Genet. Biol.">
        <title>Physiological function of hydrophobin Hydph16 in cell wall formation in agaricomycete Pleurotus ostreatus.</title>
        <authorList>
            <person name="Han J."/>
            <person name="Kawauchi M."/>
            <person name="Terauchi Y."/>
            <person name="Tsuji K."/>
            <person name="Yoshimi A."/>
            <person name="Tanaka C."/>
            <person name="Nakazawa T."/>
            <person name="Honda Y."/>
        </authorList>
    </citation>
    <scope>FUNCTION</scope>
    <scope>DISRUPTION PHENOTYPE</scope>
</reference>
<comment type="function">
    <text evidence="4 6">Aerial growth, conidiation, and dispersal of filamentous fungi in the environment rely upon a capability of their secreting small amphipathic proteins called hydrophobins (HPBs) with low sequence identity. Class I can self-assemble into an outermost layer of rodlet bundles on aerial cell surfaces, conferring cellular hydrophobicity that supports fungal growth, development and dispersal; whereas Class II form highly ordered films at water-air interfaces through intermolecular interactions but contribute nothing to the rodlet structure (Probable). Hydph16 is a class I hydrophobin that has specific functions in aerial mycelium formation, cell wall stress protection, and cell wall structure formation, but does not seem to be involved in mycelial hydrophobicity (PubMed:39612978). Specifically functions in resisting cell wall synthesis inhibitors (PubMed:39612978).</text>
</comment>
<comment type="subunit">
    <text evidence="1">Self-assembles to form functional amyloid fibrils called rodlets. Self-assembly into fibrillar rodlets occurs spontaneously at hydrophobic:hydrophilic interfaces and the rodlets further associate laterally to form amphipathic monolayers.</text>
</comment>
<comment type="subcellular location">
    <subcellularLocation>
        <location evidence="7">Secreted</location>
    </subcellularLocation>
    <subcellularLocation>
        <location evidence="7">Secreted</location>
        <location evidence="7">Cell wall</location>
    </subcellularLocation>
</comment>
<comment type="disruption phenotype">
    <text evidence="4">Increases the sensitivity to sodium dodecyl sulfate (SDS, a cell membrane degrader), hydrogen peroxide (H(2)O(2), an oxidative stressor), calcofluor white (CFW, a chitin synthesis inhibitor) and micafungin (MF, a beta-glucan synthesis inhibitor) (PubMed:39612978). Leads to sparser aerial and reduces the cell wall thickness by 40% (PubMed:39612978). Does not affect the chitin and glucan amounts, nor the cell wall synthesis-related gene expression levels (PubMed:39612978). Also, does not affect the hydrophobicity of the aerial mycelia (PubMed:39612978).</text>
</comment>
<comment type="similarity">
    <text evidence="6">Belongs to the fungal hydrophobin family.</text>
</comment>
<sequence>MKFTSVIALVATAATLVGAVPFETNAERLARGLPPLPPARRASGVEAAKPKPSPSHGCSTGPVQCCNDLVDRSNHTVGILIGLLGIVLGPVTGLFGLGCSPLLGGGAKCQSQTVCCSDNKFSGIINIGCSPINIGL</sequence>
<accession>A0A067P943</accession>
<evidence type="ECO:0000250" key="1">
    <source>
        <dbReference type="UniProtKB" id="Q04571"/>
    </source>
</evidence>
<evidence type="ECO:0000255" key="2"/>
<evidence type="ECO:0000255" key="3">
    <source>
        <dbReference type="PROSITE-ProRule" id="PRU00498"/>
    </source>
</evidence>
<evidence type="ECO:0000269" key="4">
    <source>
    </source>
</evidence>
<evidence type="ECO:0000303" key="5">
    <source>
    </source>
</evidence>
<evidence type="ECO:0000305" key="6"/>
<evidence type="ECO:0000305" key="7">
    <source>
    </source>
</evidence>
<protein>
    <recommendedName>
        <fullName evidence="5">Class I hydrophobin 16</fullName>
    </recommendedName>
</protein>
<proteinExistence type="inferred from homology"/>
<dbReference type="EMBL" id="KL198004">
    <property type="protein sequence ID" value="KDQ32927.1"/>
    <property type="molecule type" value="Genomic_DNA"/>
</dbReference>
<dbReference type="SMR" id="A0A067P943"/>
<dbReference type="STRING" id="1137138.A0A067P943"/>
<dbReference type="VEuPathDB" id="FungiDB:PLEOSDRAFT_1060612"/>
<dbReference type="HOGENOM" id="CLU_105134_1_0_1"/>
<dbReference type="InParanoid" id="A0A067P943"/>
<dbReference type="OrthoDB" id="230174at5338"/>
<dbReference type="Proteomes" id="UP000027073">
    <property type="component" value="Unassembled WGS sequence"/>
</dbReference>
<dbReference type="GO" id="GO:0005576">
    <property type="term" value="C:extracellular region"/>
    <property type="evidence" value="ECO:0007669"/>
    <property type="project" value="UniProtKB-KW"/>
</dbReference>
<dbReference type="GO" id="GO:0009277">
    <property type="term" value="C:fungal-type cell wall"/>
    <property type="evidence" value="ECO:0007669"/>
    <property type="project" value="InterPro"/>
</dbReference>
<dbReference type="GO" id="GO:0016020">
    <property type="term" value="C:membrane"/>
    <property type="evidence" value="ECO:0007669"/>
    <property type="project" value="UniProtKB-KW"/>
</dbReference>
<dbReference type="GO" id="GO:0005199">
    <property type="term" value="F:structural constituent of cell wall"/>
    <property type="evidence" value="ECO:0007669"/>
    <property type="project" value="InterPro"/>
</dbReference>
<dbReference type="CDD" id="cd23507">
    <property type="entry name" value="hydrophobin_I"/>
    <property type="match status" value="1"/>
</dbReference>
<dbReference type="InterPro" id="IPR001338">
    <property type="entry name" value="Hydrophobin"/>
</dbReference>
<dbReference type="Pfam" id="PF01185">
    <property type="entry name" value="Hydrophobin"/>
    <property type="match status" value="1"/>
</dbReference>
<dbReference type="SMART" id="SM00075">
    <property type="entry name" value="HYDRO"/>
    <property type="match status" value="1"/>
</dbReference>
<keyword id="KW-0134">Cell wall</keyword>
<keyword id="KW-1015">Disulfide bond</keyword>
<keyword id="KW-0325">Glycoprotein</keyword>
<keyword id="KW-1185">Reference proteome</keyword>
<keyword id="KW-0964">Secreted</keyword>
<keyword id="KW-0732">Signal</keyword>
<feature type="signal peptide" evidence="2">
    <location>
        <begin position="1"/>
        <end position="19"/>
    </location>
</feature>
<feature type="chain" id="PRO_5001647336" description="Class I hydrophobin 16">
    <location>
        <begin position="20"/>
        <end position="136"/>
    </location>
</feature>
<feature type="glycosylation site" description="N-linked (GlcNAc...) asparagine" evidence="3">
    <location>
        <position position="74"/>
    </location>
</feature>
<feature type="disulfide bond" evidence="1">
    <location>
        <begin position="58"/>
        <end position="115"/>
    </location>
</feature>
<feature type="disulfide bond" evidence="1">
    <location>
        <begin position="65"/>
        <end position="109"/>
    </location>
</feature>
<feature type="disulfide bond" evidence="1">
    <location>
        <begin position="66"/>
        <end position="99"/>
    </location>
</feature>
<feature type="disulfide bond" evidence="1">
    <location>
        <begin position="116"/>
        <end position="129"/>
    </location>
</feature>
<name>HYD16_PLEO1</name>
<organism>
    <name type="scientific">Pleurotus ostreatus (strain PC15)</name>
    <name type="common">Oyster mushroom</name>
    <dbReference type="NCBI Taxonomy" id="1137138"/>
    <lineage>
        <taxon>Eukaryota</taxon>
        <taxon>Fungi</taxon>
        <taxon>Dikarya</taxon>
        <taxon>Basidiomycota</taxon>
        <taxon>Agaricomycotina</taxon>
        <taxon>Agaricomycetes</taxon>
        <taxon>Agaricomycetidae</taxon>
        <taxon>Agaricales</taxon>
        <taxon>Pleurotineae</taxon>
        <taxon>Pleurotaceae</taxon>
        <taxon>Pleurotus</taxon>
    </lineage>
</organism>
<gene>
    <name evidence="5" type="primary">Hydph16</name>
    <name type="ORF">PLEOSDRAFT_1060612</name>
</gene>